<evidence type="ECO:0000255" key="1">
    <source>
        <dbReference type="HAMAP-Rule" id="MF_00197"/>
    </source>
</evidence>
<organism>
    <name type="scientific">Haemophilus influenzae (strain PittGG)</name>
    <dbReference type="NCBI Taxonomy" id="374931"/>
    <lineage>
        <taxon>Bacteria</taxon>
        <taxon>Pseudomonadati</taxon>
        <taxon>Pseudomonadota</taxon>
        <taxon>Gammaproteobacteria</taxon>
        <taxon>Pasteurellales</taxon>
        <taxon>Pasteurellaceae</taxon>
        <taxon>Haemophilus</taxon>
    </lineage>
</organism>
<comment type="function">
    <text evidence="1">Catalyzes the stereoinversion of LL-2,6-diaminopimelate (L,L-DAP) to meso-diaminopimelate (meso-DAP), a precursor of L-lysine and an essential component of the bacterial peptidoglycan.</text>
</comment>
<comment type="catalytic activity">
    <reaction evidence="1">
        <text>(2S,6S)-2,6-diaminopimelate = meso-2,6-diaminopimelate</text>
        <dbReference type="Rhea" id="RHEA:15393"/>
        <dbReference type="ChEBI" id="CHEBI:57609"/>
        <dbReference type="ChEBI" id="CHEBI:57791"/>
        <dbReference type="EC" id="5.1.1.7"/>
    </reaction>
</comment>
<comment type="pathway">
    <text evidence="1">Amino-acid biosynthesis; L-lysine biosynthesis via DAP pathway; DL-2,6-diaminopimelate from LL-2,6-diaminopimelate: step 1/1.</text>
</comment>
<comment type="subunit">
    <text evidence="1">Homodimer.</text>
</comment>
<comment type="subcellular location">
    <subcellularLocation>
        <location evidence="1">Cytoplasm</location>
    </subcellularLocation>
</comment>
<comment type="similarity">
    <text evidence="1">Belongs to the diaminopimelate epimerase family.</text>
</comment>
<protein>
    <recommendedName>
        <fullName evidence="1">Diaminopimelate epimerase</fullName>
        <shortName evidence="1">DAP epimerase</shortName>
        <ecNumber evidence="1">5.1.1.7</ecNumber>
    </recommendedName>
    <alternativeName>
        <fullName evidence="1">PLP-independent amino acid racemase</fullName>
    </alternativeName>
</protein>
<sequence length="274" mass="30238">MQFSKMHGLGNDFVVVDGVTQNVFFTPETIRRLANRHCGIGFDQLLIVEAPYDPELDFHYRIFNADGSEVSQCGNGARCFARFVTLKGLTNKKDISVSTQKGNMVLTVKDDNQIRVNMGEPIWEPAKIPFTANKFEKNYILRTDIQTVLCGAVSMGNPHCVVQVDDIQTANVEQLGPLLESHERFPERVNAGFMQIINKEHIKLRVYERGAGETQACGSGACAAVAVGIMQGLLNNNVQVDLSGGSLMIEWNGVGHPLYMTGEATHIYDGFITL</sequence>
<keyword id="KW-0028">Amino-acid biosynthesis</keyword>
<keyword id="KW-0963">Cytoplasm</keyword>
<keyword id="KW-0413">Isomerase</keyword>
<keyword id="KW-0457">Lysine biosynthesis</keyword>
<name>DAPF_HAEIG</name>
<reference key="1">
    <citation type="journal article" date="2007" name="Genome Biol.">
        <title>Characterization and modeling of the Haemophilus influenzae core and supragenomes based on the complete genomic sequences of Rd and 12 clinical nontypeable strains.</title>
        <authorList>
            <person name="Hogg J.S."/>
            <person name="Hu F.Z."/>
            <person name="Janto B."/>
            <person name="Boissy R."/>
            <person name="Hayes J."/>
            <person name="Keefe R."/>
            <person name="Post J.C."/>
            <person name="Ehrlich G.D."/>
        </authorList>
    </citation>
    <scope>NUCLEOTIDE SEQUENCE [LARGE SCALE GENOMIC DNA]</scope>
    <source>
        <strain>PittGG</strain>
    </source>
</reference>
<accession>A5UHQ4</accession>
<gene>
    <name evidence="1" type="primary">dapF</name>
    <name type="ordered locus">CGSHiGG_07245</name>
</gene>
<proteinExistence type="inferred from homology"/>
<dbReference type="EC" id="5.1.1.7" evidence="1"/>
<dbReference type="EMBL" id="CP000672">
    <property type="protein sequence ID" value="ABR00310.1"/>
    <property type="molecule type" value="Genomic_DNA"/>
</dbReference>
<dbReference type="SMR" id="A5UHQ4"/>
<dbReference type="KEGG" id="hiq:CGSHiGG_07245"/>
<dbReference type="HOGENOM" id="CLU_053306_1_1_6"/>
<dbReference type="UniPathway" id="UPA00034">
    <property type="reaction ID" value="UER00025"/>
</dbReference>
<dbReference type="Proteomes" id="UP000001990">
    <property type="component" value="Chromosome"/>
</dbReference>
<dbReference type="GO" id="GO:0005829">
    <property type="term" value="C:cytosol"/>
    <property type="evidence" value="ECO:0007669"/>
    <property type="project" value="TreeGrafter"/>
</dbReference>
<dbReference type="GO" id="GO:0008837">
    <property type="term" value="F:diaminopimelate epimerase activity"/>
    <property type="evidence" value="ECO:0007669"/>
    <property type="project" value="UniProtKB-UniRule"/>
</dbReference>
<dbReference type="GO" id="GO:0009089">
    <property type="term" value="P:lysine biosynthetic process via diaminopimelate"/>
    <property type="evidence" value="ECO:0007669"/>
    <property type="project" value="UniProtKB-UniRule"/>
</dbReference>
<dbReference type="FunFam" id="3.10.310.10:FF:000001">
    <property type="entry name" value="Diaminopimelate epimerase"/>
    <property type="match status" value="1"/>
</dbReference>
<dbReference type="FunFam" id="3.10.310.10:FF:000002">
    <property type="entry name" value="Diaminopimelate epimerase"/>
    <property type="match status" value="1"/>
</dbReference>
<dbReference type="Gene3D" id="3.10.310.10">
    <property type="entry name" value="Diaminopimelate Epimerase, Chain A, domain 1"/>
    <property type="match status" value="2"/>
</dbReference>
<dbReference type="HAMAP" id="MF_00197">
    <property type="entry name" value="DAP_epimerase"/>
    <property type="match status" value="1"/>
</dbReference>
<dbReference type="InterPro" id="IPR018510">
    <property type="entry name" value="DAP_epimerase_AS"/>
</dbReference>
<dbReference type="InterPro" id="IPR001653">
    <property type="entry name" value="DAP_epimerase_DapF"/>
</dbReference>
<dbReference type="NCBIfam" id="TIGR00652">
    <property type="entry name" value="DapF"/>
    <property type="match status" value="1"/>
</dbReference>
<dbReference type="PANTHER" id="PTHR31689:SF0">
    <property type="entry name" value="DIAMINOPIMELATE EPIMERASE"/>
    <property type="match status" value="1"/>
</dbReference>
<dbReference type="PANTHER" id="PTHR31689">
    <property type="entry name" value="DIAMINOPIMELATE EPIMERASE, CHLOROPLASTIC"/>
    <property type="match status" value="1"/>
</dbReference>
<dbReference type="Pfam" id="PF01678">
    <property type="entry name" value="DAP_epimerase"/>
    <property type="match status" value="2"/>
</dbReference>
<dbReference type="SUPFAM" id="SSF54506">
    <property type="entry name" value="Diaminopimelate epimerase-like"/>
    <property type="match status" value="1"/>
</dbReference>
<dbReference type="PROSITE" id="PS01326">
    <property type="entry name" value="DAP_EPIMERASE"/>
    <property type="match status" value="1"/>
</dbReference>
<feature type="chain" id="PRO_1000011886" description="Diaminopimelate epimerase">
    <location>
        <begin position="1"/>
        <end position="274"/>
    </location>
</feature>
<feature type="active site" description="Proton donor" evidence="1">
    <location>
        <position position="73"/>
    </location>
</feature>
<feature type="active site" description="Proton acceptor" evidence="1">
    <location>
        <position position="217"/>
    </location>
</feature>
<feature type="binding site" evidence="1">
    <location>
        <position position="11"/>
    </location>
    <ligand>
        <name>substrate</name>
    </ligand>
</feature>
<feature type="binding site" evidence="1">
    <location>
        <position position="44"/>
    </location>
    <ligand>
        <name>substrate</name>
    </ligand>
</feature>
<feature type="binding site" evidence="1">
    <location>
        <position position="64"/>
    </location>
    <ligand>
        <name>substrate</name>
    </ligand>
</feature>
<feature type="binding site" evidence="1">
    <location>
        <begin position="74"/>
        <end position="75"/>
    </location>
    <ligand>
        <name>substrate</name>
    </ligand>
</feature>
<feature type="binding site" evidence="1">
    <location>
        <position position="157"/>
    </location>
    <ligand>
        <name>substrate</name>
    </ligand>
</feature>
<feature type="binding site" evidence="1">
    <location>
        <position position="190"/>
    </location>
    <ligand>
        <name>substrate</name>
    </ligand>
</feature>
<feature type="binding site" evidence="1">
    <location>
        <begin position="208"/>
        <end position="209"/>
    </location>
    <ligand>
        <name>substrate</name>
    </ligand>
</feature>
<feature type="binding site" evidence="1">
    <location>
        <begin position="218"/>
        <end position="219"/>
    </location>
    <ligand>
        <name>substrate</name>
    </ligand>
</feature>
<feature type="site" description="Could be important to modulate the pK values of the two catalytic cysteine residues" evidence="1">
    <location>
        <position position="159"/>
    </location>
</feature>
<feature type="site" description="Could be important to modulate the pK values of the two catalytic cysteine residues" evidence="1">
    <location>
        <position position="208"/>
    </location>
</feature>
<feature type="site" description="Important for dimerization" evidence="1">
    <location>
        <position position="268"/>
    </location>
</feature>